<feature type="chain" id="PRO_0000234646" description="ABC transporter G family member 37">
    <location>
        <begin position="1"/>
        <end position="1450"/>
    </location>
</feature>
<feature type="transmembrane region" description="Helical" evidence="2">
    <location>
        <begin position="527"/>
        <end position="547"/>
    </location>
</feature>
<feature type="transmembrane region" description="Helical" evidence="2">
    <location>
        <begin position="559"/>
        <end position="579"/>
    </location>
</feature>
<feature type="transmembrane region" description="Helical" evidence="2">
    <location>
        <begin position="614"/>
        <end position="634"/>
    </location>
</feature>
<feature type="transmembrane region" description="Helical" evidence="2">
    <location>
        <begin position="646"/>
        <end position="666"/>
    </location>
</feature>
<feature type="transmembrane region" description="Helical" evidence="2">
    <location>
        <begin position="670"/>
        <end position="690"/>
    </location>
</feature>
<feature type="transmembrane region" description="Helical" evidence="2">
    <location>
        <begin position="756"/>
        <end position="776"/>
    </location>
</feature>
<feature type="transmembrane region" description="Helical" evidence="2">
    <location>
        <begin position="1198"/>
        <end position="1218"/>
    </location>
</feature>
<feature type="transmembrane region" description="Helical" evidence="2">
    <location>
        <begin position="1236"/>
        <end position="1256"/>
    </location>
</feature>
<feature type="transmembrane region" description="Helical" evidence="2">
    <location>
        <begin position="1284"/>
        <end position="1304"/>
    </location>
</feature>
<feature type="transmembrane region" description="Helical" evidence="2">
    <location>
        <begin position="1311"/>
        <end position="1331"/>
    </location>
</feature>
<feature type="transmembrane region" description="Helical" evidence="2">
    <location>
        <begin position="1341"/>
        <end position="1361"/>
    </location>
</feature>
<feature type="transmembrane region" description="Helical" evidence="2">
    <location>
        <begin position="1372"/>
        <end position="1392"/>
    </location>
</feature>
<feature type="transmembrane region" description="Helical" evidence="2">
    <location>
        <begin position="1422"/>
        <end position="1442"/>
    </location>
</feature>
<feature type="domain" description="ABC transporter 1" evidence="3">
    <location>
        <begin position="158"/>
        <end position="431"/>
    </location>
</feature>
<feature type="domain" description="ABC transmembrane type-2 1">
    <location>
        <begin position="509"/>
        <end position="721"/>
    </location>
</feature>
<feature type="domain" description="ABC transporter 2" evidence="3">
    <location>
        <begin position="852"/>
        <end position="1104"/>
    </location>
</feature>
<feature type="domain" description="ABC transmembrane type-2 2">
    <location>
        <begin position="1177"/>
        <end position="1391"/>
    </location>
</feature>
<feature type="binding site" evidence="3">
    <location>
        <begin position="191"/>
        <end position="198"/>
    </location>
    <ligand>
        <name>ATP</name>
        <dbReference type="ChEBI" id="CHEBI:30616"/>
        <label>1</label>
    </ligand>
</feature>
<feature type="binding site" evidence="3">
    <location>
        <begin position="897"/>
        <end position="904"/>
    </location>
    <ligand>
        <name>ATP</name>
        <dbReference type="ChEBI" id="CHEBI:30616"/>
        <label>2</label>
    </ligand>
</feature>
<feature type="sequence conflict" description="In Ref. 6; AK065988." evidence="8" ref="6">
    <original>G</original>
    <variation>R</variation>
    <location>
        <position position="940"/>
    </location>
</feature>
<feature type="sequence conflict" description="In Ref. 6; AK065988." evidence="8" ref="6">
    <original>M</original>
    <variation>T</variation>
    <location>
        <position position="1331"/>
    </location>
</feature>
<sequence>MDREVHRMASLRREGSMWRSGGDVFSRSSSRFQDEDDDEEALRWAALERLPTYDRVRRGILAVSSEDGGAGGEKVEVDVGRLGARESRALIERLVRAADDDHERFLLKLRERMDRVGIDYPTIEVRFENLEVEADVHVGNRGLPTLLNSVTNTVEAIGNALHILPNKKQPMTVLHDVSGIIKPRRMTLLLGPPGSGKTTLLLALAGKLDKDLKVSGKVTYNGHGMHEFVPERTAAYISQHDLHIGEMTVRETLAFSARCQGVGTRYEMLTELARREKAANIKPDHDIDIYMKASAMGGQESSVVTDYILKILGLDICADTVVGNEMLRGISGGQRKRVTTGEMLVGPARALFMDEISTGLDSSTTYQIVNSLRQTIHILGGTAVISLLQPAPETYNLFDDIILLSDGQVVYQGPREHVLEFFEFMGFRCPARKGVADFLQEVTSRKDQGQYWCRRDRPYRFVPVKQFADAFRSFHVGRSIQNELSEPFDRTRSHPAALATSKYGVSRKELLKATIDRELLLMKRNAFMYIFKAVNLTLMALIVMTTFFRTSMRHDRDYGMIYLGALYFALDTVMFNGFAELAMTVMKLPVFFKQRDLLFFPAWAYTIPSWILQIPITFLEVGVYVFITYYVIGFDPSVSRFFKQYLLLLALNQMSSALFRFIAGIGRDMVVSHTFGPLSLLAFAALGGFILARPDVKKWWIWGYWISPLSYAQNAISTNEFLGHSWSQILPGENVTLGVSVLKSRGIFTEAKWYWIGLGALLGYTLLFNLLYTVALSVLSPFTDSHASMSEDALKEKHANLTGEVVEGQKDTKSRKQELELSHIADQNSGINSADSSASRKGMVLPFAPLSISFNDVRYSVDMPEAMKAQGITEDRLLLLKGVSGSFRPGVLTALMGVSGAGKTTLMDVLAGRKTGGYIEGDIRISGYPKKQETFARISGYCEQNDIHSPHVTVYESLVFSAWLRLPSEVDSEARKMFIEEVMDLVELTSLRGALVGLPGVSGLSTEQRKRLTIAVELVANPSIIFMDEPTSGLDARAAAIVMRTVRNTVNTGRTVVCTIHQPSIDIFEAFDELFLMKRGGEEIYVGPVGQNSSKLIEYFEGIDGVSRIKDGYNPATWMLEVTSSAQEEMLGVDFSEIYRQSELYQRNKELIEELSTPPPGSTDLNFPTQYSRSFITQCLACLWKQNWSYWRNPSYTAVRLLFTIVIALMFGTMFWNLGTRTKKQQDLFNAMGSMYAAVLYIGVQNSGSVQPVVVVERTVFYRERAAGMYSAFPYAFGQVAIELPYIMVQTLIYGVLVYSMIGFEWTVAKFLWYLFFMYFTLLYFTFYGMMAVGLTPNESIAAIISSAFYNVWNLFSGYLIPRPKIPVWWRWYCWICPVAWTLYGLVASQFGDIQHVLEGDTRTVAQFVTDYFGFHHNFLWVVAVVHVVFAVTFAFLFSFAIMKFNFQRR</sequence>
<comment type="function">
    <text evidence="1">May be a general defense protein.</text>
</comment>
<comment type="subcellular location">
    <subcellularLocation>
        <location evidence="2">Membrane</location>
        <topology evidence="2">Multi-pass membrane protein</topology>
    </subcellularLocation>
</comment>
<comment type="similarity">
    <text evidence="8">Belongs to the ABC transporter superfamily. ABCG family. PDR (TC 3.A.1.205) subfamily.</text>
</comment>
<comment type="sequence caution" evidence="8">
    <conflict type="erroneous initiation">
        <sequence resource="EMBL-CDS" id="BAD52527"/>
    </conflict>
    <text>Truncated N-terminus.</text>
</comment>
<comment type="sequence caution" evidence="8">
    <conflict type="erroneous gene model prediction">
        <sequence resource="EMBL-CDS" id="BAF05455"/>
    </conflict>
</comment>
<protein>
    <recommendedName>
        <fullName evidence="7">ABC transporter G family member 37</fullName>
        <shortName evidence="7">OsABCG37</shortName>
    </recommendedName>
    <alternativeName>
        <fullName evidence="5 6">Pleiotropic drug resistance protein 8</fullName>
        <shortName evidence="6">OsPDR8</shortName>
    </alternativeName>
</protein>
<gene>
    <name evidence="7" type="primary">ABCG37</name>
    <name evidence="4" type="synonym">PDR4</name>
    <name evidence="5 6" type="synonym">PDR8</name>
    <name evidence="10" type="ordered locus">Os01g0609900</name>
    <name type="ordered locus">LOC_Os01g42410</name>
    <name evidence="9" type="ORF">P0410E03.10</name>
</gene>
<keyword id="KW-0067">ATP-binding</keyword>
<keyword id="KW-0472">Membrane</keyword>
<keyword id="KW-0547">Nucleotide-binding</keyword>
<keyword id="KW-1185">Reference proteome</keyword>
<keyword id="KW-0677">Repeat</keyword>
<keyword id="KW-0812">Transmembrane</keyword>
<keyword id="KW-1133">Transmembrane helix</keyword>
<keyword id="KW-0813">Transport</keyword>
<organism>
    <name type="scientific">Oryza sativa subsp. japonica</name>
    <name type="common">Rice</name>
    <dbReference type="NCBI Taxonomy" id="39947"/>
    <lineage>
        <taxon>Eukaryota</taxon>
        <taxon>Viridiplantae</taxon>
        <taxon>Streptophyta</taxon>
        <taxon>Embryophyta</taxon>
        <taxon>Tracheophyta</taxon>
        <taxon>Spermatophyta</taxon>
        <taxon>Magnoliopsida</taxon>
        <taxon>Liliopsida</taxon>
        <taxon>Poales</taxon>
        <taxon>Poaceae</taxon>
        <taxon>BOP clade</taxon>
        <taxon>Oryzoideae</taxon>
        <taxon>Oryzeae</taxon>
        <taxon>Oryzinae</taxon>
        <taxon>Oryza</taxon>
        <taxon>Oryza sativa</taxon>
    </lineage>
</organism>
<evidence type="ECO:0000250" key="1"/>
<evidence type="ECO:0000255" key="2"/>
<evidence type="ECO:0000255" key="3">
    <source>
        <dbReference type="PROSITE-ProRule" id="PRU00434"/>
    </source>
</evidence>
<evidence type="ECO:0000303" key="4">
    <source>
    </source>
</evidence>
<evidence type="ECO:0000303" key="5">
    <source>
    </source>
</evidence>
<evidence type="ECO:0000303" key="6">
    <source>
    </source>
</evidence>
<evidence type="ECO:0000303" key="7">
    <source>
    </source>
</evidence>
<evidence type="ECO:0000305" key="8"/>
<evidence type="ECO:0000312" key="9">
    <source>
        <dbReference type="EMBL" id="BAD52527.1"/>
    </source>
</evidence>
<evidence type="ECO:0000312" key="10">
    <source>
        <dbReference type="EMBL" id="BAF05455.1"/>
    </source>
</evidence>
<name>AB37G_ORYSJ</name>
<accession>Q8GU89</accession>
<accession>Q0JLC3</accession>
<accession>Q5ZE25</accession>
<dbReference type="EMBL" id="AJ535047">
    <property type="protein sequence ID" value="CAD59569.1"/>
    <property type="molecule type" value="Genomic_DNA"/>
</dbReference>
<dbReference type="EMBL" id="AP002844">
    <property type="protein sequence ID" value="BAD52527.1"/>
    <property type="status" value="ALT_INIT"/>
    <property type="molecule type" value="Genomic_DNA"/>
</dbReference>
<dbReference type="EMBL" id="AP008207">
    <property type="protein sequence ID" value="BAF05455.1"/>
    <property type="status" value="ALT_SEQ"/>
    <property type="molecule type" value="Genomic_DNA"/>
</dbReference>
<dbReference type="EMBL" id="AP014957">
    <property type="status" value="NOT_ANNOTATED_CDS"/>
    <property type="molecule type" value="Genomic_DNA"/>
</dbReference>
<dbReference type="EMBL" id="AK065988">
    <property type="status" value="NOT_ANNOTATED_CDS"/>
    <property type="molecule type" value="mRNA"/>
</dbReference>
<dbReference type="EMBL" id="BK001018">
    <property type="protein sequence ID" value="DAA00887.1"/>
    <property type="molecule type" value="Genomic_DNA"/>
</dbReference>
<dbReference type="RefSeq" id="XP_015648329.1">
    <property type="nucleotide sequence ID" value="XM_015792843.1"/>
</dbReference>
<dbReference type="SMR" id="Q8GU89"/>
<dbReference type="FunCoup" id="Q8GU89">
    <property type="interactions" value="114"/>
</dbReference>
<dbReference type="STRING" id="39947.Q8GU89"/>
<dbReference type="PaxDb" id="39947-Q8GU89"/>
<dbReference type="KEGG" id="dosa:Os01g0609900"/>
<dbReference type="eggNOG" id="KOG0065">
    <property type="taxonomic scope" value="Eukaryota"/>
</dbReference>
<dbReference type="InParanoid" id="Q8GU89"/>
<dbReference type="OrthoDB" id="66620at2759"/>
<dbReference type="Proteomes" id="UP000000763">
    <property type="component" value="Chromosome 1"/>
</dbReference>
<dbReference type="Proteomes" id="UP000059680">
    <property type="component" value="Chromosome 1"/>
</dbReference>
<dbReference type="GO" id="GO:0016020">
    <property type="term" value="C:membrane"/>
    <property type="evidence" value="ECO:0007669"/>
    <property type="project" value="UniProtKB-SubCell"/>
</dbReference>
<dbReference type="GO" id="GO:0140359">
    <property type="term" value="F:ABC-type transporter activity"/>
    <property type="evidence" value="ECO:0007669"/>
    <property type="project" value="InterPro"/>
</dbReference>
<dbReference type="GO" id="GO:0005524">
    <property type="term" value="F:ATP binding"/>
    <property type="evidence" value="ECO:0007669"/>
    <property type="project" value="UniProtKB-KW"/>
</dbReference>
<dbReference type="GO" id="GO:0016887">
    <property type="term" value="F:ATP hydrolysis activity"/>
    <property type="evidence" value="ECO:0007669"/>
    <property type="project" value="InterPro"/>
</dbReference>
<dbReference type="CDD" id="cd03233">
    <property type="entry name" value="ABCG_PDR_domain1"/>
    <property type="match status" value="1"/>
</dbReference>
<dbReference type="CDD" id="cd03232">
    <property type="entry name" value="ABCG_PDR_domain2"/>
    <property type="match status" value="1"/>
</dbReference>
<dbReference type="FunFam" id="3.40.50.300:FF:000179">
    <property type="entry name" value="ABC transporter G family member 34"/>
    <property type="match status" value="1"/>
</dbReference>
<dbReference type="FunFam" id="3.40.50.300:FF:000059">
    <property type="entry name" value="ABC transporter G family member 40"/>
    <property type="match status" value="1"/>
</dbReference>
<dbReference type="Gene3D" id="3.40.50.300">
    <property type="entry name" value="P-loop containing nucleotide triphosphate hydrolases"/>
    <property type="match status" value="2"/>
</dbReference>
<dbReference type="InterPro" id="IPR003593">
    <property type="entry name" value="AAA+_ATPase"/>
</dbReference>
<dbReference type="InterPro" id="IPR013525">
    <property type="entry name" value="ABC2_TM"/>
</dbReference>
<dbReference type="InterPro" id="IPR029481">
    <property type="entry name" value="ABC_trans_N"/>
</dbReference>
<dbReference type="InterPro" id="IPR003439">
    <property type="entry name" value="ABC_transporter-like_ATP-bd"/>
</dbReference>
<dbReference type="InterPro" id="IPR043926">
    <property type="entry name" value="ABCG_dom"/>
</dbReference>
<dbReference type="InterPro" id="IPR034001">
    <property type="entry name" value="ABCG_PDR_1"/>
</dbReference>
<dbReference type="InterPro" id="IPR034003">
    <property type="entry name" value="ABCG_PDR_2"/>
</dbReference>
<dbReference type="InterPro" id="IPR027417">
    <property type="entry name" value="P-loop_NTPase"/>
</dbReference>
<dbReference type="InterPro" id="IPR013581">
    <property type="entry name" value="PDR_assoc"/>
</dbReference>
<dbReference type="PANTHER" id="PTHR48040:SF20">
    <property type="entry name" value="PLEIOTROPIC DRUG RESISTANCE PROTEIN 1"/>
    <property type="match status" value="1"/>
</dbReference>
<dbReference type="PANTHER" id="PTHR48040">
    <property type="entry name" value="PLEIOTROPIC DRUG RESISTANCE PROTEIN 1-LIKE ISOFORM X1"/>
    <property type="match status" value="1"/>
</dbReference>
<dbReference type="Pfam" id="PF01061">
    <property type="entry name" value="ABC2_membrane"/>
    <property type="match status" value="2"/>
</dbReference>
<dbReference type="Pfam" id="PF19055">
    <property type="entry name" value="ABC2_membrane_7"/>
    <property type="match status" value="1"/>
</dbReference>
<dbReference type="Pfam" id="PF00005">
    <property type="entry name" value="ABC_tran"/>
    <property type="match status" value="2"/>
</dbReference>
<dbReference type="Pfam" id="PF14510">
    <property type="entry name" value="ABC_trans_N"/>
    <property type="match status" value="1"/>
</dbReference>
<dbReference type="Pfam" id="PF08370">
    <property type="entry name" value="PDR_assoc"/>
    <property type="match status" value="1"/>
</dbReference>
<dbReference type="SMART" id="SM00382">
    <property type="entry name" value="AAA"/>
    <property type="match status" value="2"/>
</dbReference>
<dbReference type="SUPFAM" id="SSF52540">
    <property type="entry name" value="P-loop containing nucleoside triphosphate hydrolases"/>
    <property type="match status" value="2"/>
</dbReference>
<dbReference type="PROSITE" id="PS50893">
    <property type="entry name" value="ABC_TRANSPORTER_2"/>
    <property type="match status" value="2"/>
</dbReference>
<proteinExistence type="evidence at transcript level"/>
<reference key="1">
    <citation type="journal article" date="2003" name="Plant Physiol.">
        <title>The ATP-binding cassette transporters: structure, function, and gene family comparison between rice and Arabidopsis.</title>
        <authorList>
            <person name="Jasinski M."/>
            <person name="Ducos E."/>
            <person name="Martinoia E."/>
            <person name="Boutry M."/>
        </authorList>
    </citation>
    <scope>NUCLEOTIDE SEQUENCE [GENOMIC DNA]</scope>
    <source>
        <strain>cv. Nipponbare</strain>
    </source>
</reference>
<reference key="2">
    <citation type="journal article" date="2002" name="Nature">
        <title>The genome sequence and structure of rice chromosome 1.</title>
        <authorList>
            <person name="Sasaki T."/>
            <person name="Matsumoto T."/>
            <person name="Yamamoto K."/>
            <person name="Sakata K."/>
            <person name="Baba T."/>
            <person name="Katayose Y."/>
            <person name="Wu J."/>
            <person name="Niimura Y."/>
            <person name="Cheng Z."/>
            <person name="Nagamura Y."/>
            <person name="Antonio B.A."/>
            <person name="Kanamori H."/>
            <person name="Hosokawa S."/>
            <person name="Masukawa M."/>
            <person name="Arikawa K."/>
            <person name="Chiden Y."/>
            <person name="Hayashi M."/>
            <person name="Okamoto M."/>
            <person name="Ando T."/>
            <person name="Aoki H."/>
            <person name="Arita K."/>
            <person name="Hamada M."/>
            <person name="Harada C."/>
            <person name="Hijishita S."/>
            <person name="Honda M."/>
            <person name="Ichikawa Y."/>
            <person name="Idonuma A."/>
            <person name="Iijima M."/>
            <person name="Ikeda M."/>
            <person name="Ikeno M."/>
            <person name="Ito S."/>
            <person name="Ito T."/>
            <person name="Ito Y."/>
            <person name="Ito Y."/>
            <person name="Iwabuchi A."/>
            <person name="Kamiya K."/>
            <person name="Karasawa W."/>
            <person name="Katagiri S."/>
            <person name="Kikuta A."/>
            <person name="Kobayashi N."/>
            <person name="Kono I."/>
            <person name="Machita K."/>
            <person name="Maehara T."/>
            <person name="Mizuno H."/>
            <person name="Mizubayashi T."/>
            <person name="Mukai Y."/>
            <person name="Nagasaki H."/>
            <person name="Nakashima M."/>
            <person name="Nakama Y."/>
            <person name="Nakamichi Y."/>
            <person name="Nakamura M."/>
            <person name="Namiki N."/>
            <person name="Negishi M."/>
            <person name="Ohta I."/>
            <person name="Ono N."/>
            <person name="Saji S."/>
            <person name="Sakai K."/>
            <person name="Shibata M."/>
            <person name="Shimokawa T."/>
            <person name="Shomura A."/>
            <person name="Song J."/>
            <person name="Takazaki Y."/>
            <person name="Terasawa K."/>
            <person name="Tsuji K."/>
            <person name="Waki K."/>
            <person name="Yamagata H."/>
            <person name="Yamane H."/>
            <person name="Yoshiki S."/>
            <person name="Yoshihara R."/>
            <person name="Yukawa K."/>
            <person name="Zhong H."/>
            <person name="Iwama H."/>
            <person name="Endo T."/>
            <person name="Ito H."/>
            <person name="Hahn J.H."/>
            <person name="Kim H.-I."/>
            <person name="Eun M.-Y."/>
            <person name="Yano M."/>
            <person name="Jiang J."/>
            <person name="Gojobori T."/>
        </authorList>
    </citation>
    <scope>NUCLEOTIDE SEQUENCE [LARGE SCALE GENOMIC DNA]</scope>
    <source>
        <strain>cv. Nipponbare</strain>
    </source>
</reference>
<reference key="3">
    <citation type="journal article" date="2005" name="Nature">
        <title>The map-based sequence of the rice genome.</title>
        <authorList>
            <consortium name="International rice genome sequencing project (IRGSP)"/>
        </authorList>
    </citation>
    <scope>NUCLEOTIDE SEQUENCE [LARGE SCALE GENOMIC DNA]</scope>
    <source>
        <strain>cv. Nipponbare</strain>
    </source>
</reference>
<reference key="4">
    <citation type="journal article" date="2008" name="Nucleic Acids Res.">
        <title>The rice annotation project database (RAP-DB): 2008 update.</title>
        <authorList>
            <consortium name="The rice annotation project (RAP)"/>
        </authorList>
    </citation>
    <scope>GENOME REANNOTATION</scope>
    <source>
        <strain>cv. Nipponbare</strain>
    </source>
</reference>
<reference key="5">
    <citation type="journal article" date="2013" name="Rice">
        <title>Improvement of the Oryza sativa Nipponbare reference genome using next generation sequence and optical map data.</title>
        <authorList>
            <person name="Kawahara Y."/>
            <person name="de la Bastide M."/>
            <person name="Hamilton J.P."/>
            <person name="Kanamori H."/>
            <person name="McCombie W.R."/>
            <person name="Ouyang S."/>
            <person name="Schwartz D.C."/>
            <person name="Tanaka T."/>
            <person name="Wu J."/>
            <person name="Zhou S."/>
            <person name="Childs K.L."/>
            <person name="Davidson R.M."/>
            <person name="Lin H."/>
            <person name="Quesada-Ocampo L."/>
            <person name="Vaillancourt B."/>
            <person name="Sakai H."/>
            <person name="Lee S.S."/>
            <person name="Kim J."/>
            <person name="Numa H."/>
            <person name="Itoh T."/>
            <person name="Buell C.R."/>
            <person name="Matsumoto T."/>
        </authorList>
    </citation>
    <scope>GENOME REANNOTATION</scope>
    <source>
        <strain>cv. Nipponbare</strain>
    </source>
</reference>
<reference key="6">
    <citation type="journal article" date="2003" name="Science">
        <title>Collection, mapping, and annotation of over 28,000 cDNA clones from japonica rice.</title>
        <authorList>
            <consortium name="The rice full-length cDNA consortium"/>
        </authorList>
    </citation>
    <scope>NUCLEOTIDE SEQUENCE [LARGE SCALE MRNA] OF 62-1450</scope>
    <source>
        <strain>cv. Nipponbare</strain>
    </source>
</reference>
<reference key="7">
    <citation type="journal article" date="2002" name="Planta">
        <title>The plant PDR family of ABC transporters.</title>
        <authorList>
            <person name="van den Brule S."/>
            <person name="Smart C.C."/>
        </authorList>
    </citation>
    <scope>IDENTIFICATION</scope>
</reference>
<reference key="8">
    <citation type="journal article" date="2006" name="FEBS Lett.">
        <title>Organization and function of the plant pleiotropic drug resistance ABC transporter family.</title>
        <authorList>
            <person name="Crouzet J."/>
            <person name="Trombik T."/>
            <person name="Fraysse A.S."/>
            <person name="Boutry M."/>
        </authorList>
    </citation>
    <scope>GENE FAMILY</scope>
    <scope>NOMENCLATURE</scope>
</reference>
<reference key="9">
    <citation type="journal article" date="2008" name="Trends Plant Sci.">
        <title>Plant ABC proteins - a unified nomenclature and updated inventory.</title>
        <authorList>
            <person name="Verrier P.J."/>
            <person name="Bird D."/>
            <person name="Burla B."/>
            <person name="Dassa E."/>
            <person name="Forestier C."/>
            <person name="Geisler M."/>
            <person name="Klein M."/>
            <person name="Kolukisaoglu H.U."/>
            <person name="Lee Y."/>
            <person name="Martinoia E."/>
            <person name="Murphy A."/>
            <person name="Rea P.A."/>
            <person name="Samuels L."/>
            <person name="Schulz B."/>
            <person name="Spalding E.J."/>
            <person name="Yazaki K."/>
            <person name="Theodoulou F.L."/>
        </authorList>
    </citation>
    <scope>GENE FAMILY</scope>
    <scope>NOMENCLATURE</scope>
</reference>